<proteinExistence type="evidence at transcript level"/>
<name>ZBTB6_BOVIN</name>
<keyword id="KW-0238">DNA-binding</keyword>
<keyword id="KW-0479">Metal-binding</keyword>
<keyword id="KW-0539">Nucleus</keyword>
<keyword id="KW-0597">Phosphoprotein</keyword>
<keyword id="KW-1185">Reference proteome</keyword>
<keyword id="KW-0677">Repeat</keyword>
<keyword id="KW-0804">Transcription</keyword>
<keyword id="KW-0805">Transcription regulation</keyword>
<keyword id="KW-0862">Zinc</keyword>
<keyword id="KW-0863">Zinc-finger</keyword>
<protein>
    <recommendedName>
        <fullName>Zinc finger and BTB domain-containing protein 6</fullName>
    </recommendedName>
    <alternativeName>
        <fullName>Zinc finger protein 482</fullName>
    </alternativeName>
</protein>
<gene>
    <name type="primary">ZBTB6</name>
    <name type="synonym">ZNF482</name>
</gene>
<dbReference type="EMBL" id="BT026250">
    <property type="protein sequence ID" value="ABG67089.1"/>
    <property type="molecule type" value="mRNA"/>
</dbReference>
<dbReference type="RefSeq" id="NP_001069675.1">
    <property type="nucleotide sequence ID" value="NM_001076207.2"/>
</dbReference>
<dbReference type="RefSeq" id="XP_005213205.1">
    <property type="nucleotide sequence ID" value="XM_005213148.4"/>
</dbReference>
<dbReference type="RefSeq" id="XP_024854825.1">
    <property type="nucleotide sequence ID" value="XM_024999057.2"/>
</dbReference>
<dbReference type="SMR" id="Q0V8G8"/>
<dbReference type="FunCoup" id="Q0V8G8">
    <property type="interactions" value="1805"/>
</dbReference>
<dbReference type="STRING" id="9913.ENSBTAP00000040937"/>
<dbReference type="PaxDb" id="9913-ENSBTAP00000040937"/>
<dbReference type="Ensembl" id="ENSBTAT00000088401.1">
    <property type="protein sequence ID" value="ENSBTAP00000078228.1"/>
    <property type="gene ID" value="ENSBTAG00000039815.3"/>
</dbReference>
<dbReference type="Ensembl" id="ENSBTAT00000108501.1">
    <property type="protein sequence ID" value="ENSBTAP00000083270.1"/>
    <property type="gene ID" value="ENSBTAG00000039815.3"/>
</dbReference>
<dbReference type="Ensembl" id="ENSBTAT00000125821.1">
    <property type="protein sequence ID" value="ENSBTAP00000103185.1"/>
    <property type="gene ID" value="ENSBTAG00000039815.3"/>
</dbReference>
<dbReference type="GeneID" id="540218"/>
<dbReference type="KEGG" id="bta:540218"/>
<dbReference type="CTD" id="10773"/>
<dbReference type="VGNC" id="VGNC:37088">
    <property type="gene designation" value="ZBTB6"/>
</dbReference>
<dbReference type="eggNOG" id="KOG1721">
    <property type="taxonomic scope" value="Eukaryota"/>
</dbReference>
<dbReference type="GeneTree" id="ENSGT00940000161459"/>
<dbReference type="HOGENOM" id="CLU_037856_1_0_1"/>
<dbReference type="InParanoid" id="Q0V8G8"/>
<dbReference type="OrthoDB" id="1405595at2759"/>
<dbReference type="TreeFam" id="TF333162"/>
<dbReference type="Proteomes" id="UP000009136">
    <property type="component" value="Chromosome 11"/>
</dbReference>
<dbReference type="GO" id="GO:0005654">
    <property type="term" value="C:nucleoplasm"/>
    <property type="evidence" value="ECO:0000318"/>
    <property type="project" value="GO_Central"/>
</dbReference>
<dbReference type="GO" id="GO:0001227">
    <property type="term" value="F:DNA-binding transcription repressor activity, RNA polymerase II-specific"/>
    <property type="evidence" value="ECO:0000318"/>
    <property type="project" value="GO_Central"/>
</dbReference>
<dbReference type="GO" id="GO:0000978">
    <property type="term" value="F:RNA polymerase II cis-regulatory region sequence-specific DNA binding"/>
    <property type="evidence" value="ECO:0000318"/>
    <property type="project" value="GO_Central"/>
</dbReference>
<dbReference type="GO" id="GO:0008270">
    <property type="term" value="F:zinc ion binding"/>
    <property type="evidence" value="ECO:0007669"/>
    <property type="project" value="UniProtKB-KW"/>
</dbReference>
<dbReference type="GO" id="GO:0000122">
    <property type="term" value="P:negative regulation of transcription by RNA polymerase II"/>
    <property type="evidence" value="ECO:0000318"/>
    <property type="project" value="GO_Central"/>
</dbReference>
<dbReference type="GO" id="GO:0001817">
    <property type="term" value="P:regulation of cytokine production"/>
    <property type="evidence" value="ECO:0000318"/>
    <property type="project" value="GO_Central"/>
</dbReference>
<dbReference type="GO" id="GO:0002682">
    <property type="term" value="P:regulation of immune system process"/>
    <property type="evidence" value="ECO:0000318"/>
    <property type="project" value="GO_Central"/>
</dbReference>
<dbReference type="CDD" id="cd18197">
    <property type="entry name" value="BTB_POZ_ZBTB6"/>
    <property type="match status" value="1"/>
</dbReference>
<dbReference type="FunFam" id="3.30.160.60:FF:000333">
    <property type="entry name" value="Zinc finger and BTB domain-containing protein 26"/>
    <property type="match status" value="1"/>
</dbReference>
<dbReference type="FunFam" id="3.30.710.10:FF:000047">
    <property type="entry name" value="Zinc finger and BTB domain-containing protein 26"/>
    <property type="match status" value="1"/>
</dbReference>
<dbReference type="FunFam" id="3.30.160.60:FF:001873">
    <property type="entry name" value="Zinc finger and BTB domain-containing protein 6"/>
    <property type="match status" value="1"/>
</dbReference>
<dbReference type="Gene3D" id="3.30.160.60">
    <property type="entry name" value="Classic Zinc Finger"/>
    <property type="match status" value="3"/>
</dbReference>
<dbReference type="Gene3D" id="3.30.710.10">
    <property type="entry name" value="Potassium Channel Kv1.1, Chain A"/>
    <property type="match status" value="1"/>
</dbReference>
<dbReference type="InterPro" id="IPR000210">
    <property type="entry name" value="BTB/POZ_dom"/>
</dbReference>
<dbReference type="InterPro" id="IPR011333">
    <property type="entry name" value="SKP1/BTB/POZ_sf"/>
</dbReference>
<dbReference type="InterPro" id="IPR036236">
    <property type="entry name" value="Znf_C2H2_sf"/>
</dbReference>
<dbReference type="InterPro" id="IPR013087">
    <property type="entry name" value="Znf_C2H2_type"/>
</dbReference>
<dbReference type="InterPro" id="IPR050457">
    <property type="entry name" value="ZnFinger_BTB_dom_contain"/>
</dbReference>
<dbReference type="PANTHER" id="PTHR46105">
    <property type="entry name" value="AGAP004733-PA"/>
    <property type="match status" value="1"/>
</dbReference>
<dbReference type="PANTHER" id="PTHR46105:SF5">
    <property type="entry name" value="ZINC FINGER AND BTB DOMAIN-CONTAINING PROTEIN 44 ISOFORM X1"/>
    <property type="match status" value="1"/>
</dbReference>
<dbReference type="Pfam" id="PF00651">
    <property type="entry name" value="BTB"/>
    <property type="match status" value="1"/>
</dbReference>
<dbReference type="Pfam" id="PF00096">
    <property type="entry name" value="zf-C2H2"/>
    <property type="match status" value="2"/>
</dbReference>
<dbReference type="SMART" id="SM00225">
    <property type="entry name" value="BTB"/>
    <property type="match status" value="1"/>
</dbReference>
<dbReference type="SMART" id="SM00355">
    <property type="entry name" value="ZnF_C2H2"/>
    <property type="match status" value="4"/>
</dbReference>
<dbReference type="SUPFAM" id="SSF57667">
    <property type="entry name" value="beta-beta-alpha zinc fingers"/>
    <property type="match status" value="2"/>
</dbReference>
<dbReference type="SUPFAM" id="SSF54695">
    <property type="entry name" value="POZ domain"/>
    <property type="match status" value="1"/>
</dbReference>
<dbReference type="PROSITE" id="PS50097">
    <property type="entry name" value="BTB"/>
    <property type="match status" value="1"/>
</dbReference>
<dbReference type="PROSITE" id="PS00028">
    <property type="entry name" value="ZINC_FINGER_C2H2_1"/>
    <property type="match status" value="4"/>
</dbReference>
<dbReference type="PROSITE" id="PS50157">
    <property type="entry name" value="ZINC_FINGER_C2H2_2"/>
    <property type="match status" value="4"/>
</dbReference>
<sequence length="424" mass="48510">MAAESDVLHFQFEQQGDVVLQKMNLLRQQNLFCDVSIYINDTEFQGHKVILAACSTFMRDQFLLTQSKHVRITILQSAEVGRKLLLSCYTGALEVKRKELLKYLTAASYLQMVHIVEKCTEALSKYLEIDLSMKNNNQHVDLCQSSDRDVKNEDENSDKDCEIIEISEDSPVNIDFHVKEEESNVLQSTVESLTTEREEMRSPELSSVDMSFKDNEIRILHVESISTGGVENGKFSQPCTSSKASMYFSETQHSLINSTVESRVAEVPGNQDQGLFCENTEGSHGPVNEIQNLEDAFSLRHQCPRCPRGFLHVENYLRHLKMHKLFLCLQCGKTFTQKKNLNRHIRGHMGIRPFQCTVCLKTFTAKSTLQDHLNIHSGDRPYKCHCCDMDFKHKSALKKHLTSLHGRSSGEKLPRHDLERQNLL</sequence>
<evidence type="ECO:0000250" key="1"/>
<evidence type="ECO:0000250" key="2">
    <source>
        <dbReference type="UniProtKB" id="Q15916"/>
    </source>
</evidence>
<evidence type="ECO:0000255" key="3">
    <source>
        <dbReference type="PROSITE-ProRule" id="PRU00037"/>
    </source>
</evidence>
<evidence type="ECO:0000255" key="4">
    <source>
        <dbReference type="PROSITE-ProRule" id="PRU00042"/>
    </source>
</evidence>
<evidence type="ECO:0000256" key="5">
    <source>
        <dbReference type="SAM" id="MobiDB-lite"/>
    </source>
</evidence>
<accession>Q0V8G8</accession>
<organism>
    <name type="scientific">Bos taurus</name>
    <name type="common">Bovine</name>
    <dbReference type="NCBI Taxonomy" id="9913"/>
    <lineage>
        <taxon>Eukaryota</taxon>
        <taxon>Metazoa</taxon>
        <taxon>Chordata</taxon>
        <taxon>Craniata</taxon>
        <taxon>Vertebrata</taxon>
        <taxon>Euteleostomi</taxon>
        <taxon>Mammalia</taxon>
        <taxon>Eutheria</taxon>
        <taxon>Laurasiatheria</taxon>
        <taxon>Artiodactyla</taxon>
        <taxon>Ruminantia</taxon>
        <taxon>Pecora</taxon>
        <taxon>Bovidae</taxon>
        <taxon>Bovinae</taxon>
        <taxon>Bos</taxon>
    </lineage>
</organism>
<feature type="chain" id="PRO_0000274207" description="Zinc finger and BTB domain-containing protein 6">
    <location>
        <begin position="1"/>
        <end position="424"/>
    </location>
</feature>
<feature type="domain" description="BTB" evidence="3">
    <location>
        <begin position="33"/>
        <end position="97"/>
    </location>
</feature>
<feature type="zinc finger region" description="C2H2-type 1" evidence="4">
    <location>
        <begin position="301"/>
        <end position="323"/>
    </location>
</feature>
<feature type="zinc finger region" description="C2H2-type 2" evidence="4">
    <location>
        <begin position="326"/>
        <end position="348"/>
    </location>
</feature>
<feature type="zinc finger region" description="C2H2-type 3" evidence="4">
    <location>
        <begin position="354"/>
        <end position="376"/>
    </location>
</feature>
<feature type="zinc finger region" description="C2H2-type 4" evidence="4">
    <location>
        <begin position="382"/>
        <end position="405"/>
    </location>
</feature>
<feature type="region of interest" description="Disordered" evidence="5">
    <location>
        <begin position="403"/>
        <end position="424"/>
    </location>
</feature>
<feature type="compositionally biased region" description="Basic and acidic residues" evidence="5">
    <location>
        <begin position="408"/>
        <end position="424"/>
    </location>
</feature>
<feature type="modified residue" description="Phosphoserine" evidence="2">
    <location>
        <position position="202"/>
    </location>
</feature>
<reference key="1">
    <citation type="journal article" date="2005" name="BMC Genomics">
        <title>Characterization of 954 bovine full-CDS cDNA sequences.</title>
        <authorList>
            <person name="Harhay G.P."/>
            <person name="Sonstegard T.S."/>
            <person name="Keele J.W."/>
            <person name="Heaton M.P."/>
            <person name="Clawson M.L."/>
            <person name="Snelling W.M."/>
            <person name="Wiedmann R.T."/>
            <person name="Van Tassell C.P."/>
            <person name="Smith T.P.L."/>
        </authorList>
    </citation>
    <scope>NUCLEOTIDE SEQUENCE [LARGE SCALE MRNA]</scope>
</reference>
<comment type="function">
    <text>May be involved in transcriptional regulation.</text>
</comment>
<comment type="subcellular location">
    <subcellularLocation>
        <location evidence="1">Nucleus</location>
    </subcellularLocation>
</comment>